<feature type="chain" id="PRO_0000293928" description="Small ribosomal subunit protein uS3">
    <location>
        <begin position="1"/>
        <end position="230"/>
    </location>
</feature>
<feature type="domain" description="KH type-2" evidence="1">
    <location>
        <begin position="43"/>
        <end position="95"/>
    </location>
</feature>
<gene>
    <name evidence="1" type="primary">rps3</name>
    <name type="ordered locus">NEQ481</name>
</gene>
<reference key="1">
    <citation type="journal article" date="2003" name="Proc. Natl. Acad. Sci. U.S.A.">
        <title>The genome of Nanoarchaeum equitans: insights into early archaeal evolution and derived parasitism.</title>
        <authorList>
            <person name="Waters E."/>
            <person name="Hohn M.J."/>
            <person name="Ahel I."/>
            <person name="Graham D.E."/>
            <person name="Adams M.D."/>
            <person name="Barnstead M."/>
            <person name="Beeson K.Y."/>
            <person name="Bibbs L."/>
            <person name="Bolanos R."/>
            <person name="Keller M."/>
            <person name="Kretz K."/>
            <person name="Lin X."/>
            <person name="Mathur E."/>
            <person name="Ni J."/>
            <person name="Podar M."/>
            <person name="Richardson T."/>
            <person name="Sutton G.G."/>
            <person name="Simon M."/>
            <person name="Soell D."/>
            <person name="Stetter K.O."/>
            <person name="Short J.M."/>
            <person name="Noorderwier M."/>
        </authorList>
    </citation>
    <scope>NUCLEOTIDE SEQUENCE [LARGE SCALE GENOMIC DNA]</scope>
    <source>
        <strain>Kin4-M</strain>
    </source>
</reference>
<sequence>MASKVIRKFIQNAKLTVFSQEFIRLYLRGANVSKVIIRQTPIVNRVIIYSARPKMISEERKAHLAKLLELKFGLEKPVIEVLPIENPNLDAHVIAERLAMGIERNIRAYRRLAQRYLETIMNAGAIGAEIVIAGRLSGQRGKTWRFKAGNLRKTGTIGQFELDRAFNIAYLKPGVAGIHVTILKPDAEIPDIIEFKSPEEISIEEIEKIDKEIAEKMKKYLETYLLAKQM</sequence>
<organism>
    <name type="scientific">Nanoarchaeum equitans (strain Kin4-M)</name>
    <dbReference type="NCBI Taxonomy" id="228908"/>
    <lineage>
        <taxon>Archaea</taxon>
        <taxon>Nanobdellota</taxon>
        <taxon>Candidatus Nanoarchaeia</taxon>
        <taxon>Nanoarchaeales</taxon>
        <taxon>Nanoarchaeaceae</taxon>
        <taxon>Nanoarchaeum</taxon>
    </lineage>
</organism>
<comment type="function">
    <text evidence="1">Binds the lower part of the 30S subunit head.</text>
</comment>
<comment type="subunit">
    <text evidence="1">Part of the 30S ribosomal subunit.</text>
</comment>
<comment type="similarity">
    <text evidence="1">Belongs to the universal ribosomal protein uS3 family.</text>
</comment>
<comment type="sequence caution" evidence="2">
    <conflict type="erroneous initiation">
        <sequence resource="EMBL-CDS" id="AAR39324"/>
    </conflict>
    <text>Extended N-terminus.</text>
</comment>
<dbReference type="EMBL" id="AE017199">
    <property type="protein sequence ID" value="AAR39324.1"/>
    <property type="status" value="ALT_INIT"/>
    <property type="molecule type" value="Genomic_DNA"/>
</dbReference>
<dbReference type="SMR" id="Q74MZ4"/>
<dbReference type="STRING" id="228908.NEQ481"/>
<dbReference type="EnsemblBacteria" id="AAR39324">
    <property type="protein sequence ID" value="AAR39324"/>
    <property type="gene ID" value="NEQ481"/>
</dbReference>
<dbReference type="KEGG" id="neq:NEQ481"/>
<dbReference type="HOGENOM" id="CLU_058591_1_1_2"/>
<dbReference type="Proteomes" id="UP000000578">
    <property type="component" value="Chromosome"/>
</dbReference>
<dbReference type="GO" id="GO:0022627">
    <property type="term" value="C:cytosolic small ribosomal subunit"/>
    <property type="evidence" value="ECO:0007669"/>
    <property type="project" value="TreeGrafter"/>
</dbReference>
<dbReference type="GO" id="GO:0019843">
    <property type="term" value="F:rRNA binding"/>
    <property type="evidence" value="ECO:0007669"/>
    <property type="project" value="UniProtKB-KW"/>
</dbReference>
<dbReference type="GO" id="GO:0003735">
    <property type="term" value="F:structural constituent of ribosome"/>
    <property type="evidence" value="ECO:0007669"/>
    <property type="project" value="InterPro"/>
</dbReference>
<dbReference type="GO" id="GO:0006412">
    <property type="term" value="P:translation"/>
    <property type="evidence" value="ECO:0007669"/>
    <property type="project" value="UniProtKB-UniRule"/>
</dbReference>
<dbReference type="Gene3D" id="3.30.300.20">
    <property type="match status" value="1"/>
</dbReference>
<dbReference type="Gene3D" id="3.30.1140.32">
    <property type="entry name" value="Ribosomal protein S3, C-terminal domain"/>
    <property type="match status" value="1"/>
</dbReference>
<dbReference type="HAMAP" id="MF_01309_A">
    <property type="entry name" value="Ribosomal_uS3_A"/>
    <property type="match status" value="1"/>
</dbReference>
<dbReference type="InterPro" id="IPR015946">
    <property type="entry name" value="KH_dom-like_a/b"/>
</dbReference>
<dbReference type="InterPro" id="IPR009019">
    <property type="entry name" value="KH_sf_prok-type"/>
</dbReference>
<dbReference type="InterPro" id="IPR036419">
    <property type="entry name" value="Ribosomal_S3_C_sf"/>
</dbReference>
<dbReference type="InterPro" id="IPR027488">
    <property type="entry name" value="Ribosomal_uS3_arc"/>
</dbReference>
<dbReference type="InterPro" id="IPR001351">
    <property type="entry name" value="Ribosomal_uS3_C"/>
</dbReference>
<dbReference type="InterPro" id="IPR005703">
    <property type="entry name" value="Ribosomal_uS3_euk/arc"/>
</dbReference>
<dbReference type="NCBIfam" id="NF003219">
    <property type="entry name" value="PRK04191.1"/>
    <property type="match status" value="1"/>
</dbReference>
<dbReference type="NCBIfam" id="TIGR01008">
    <property type="entry name" value="uS3_euk_arch"/>
    <property type="match status" value="1"/>
</dbReference>
<dbReference type="PANTHER" id="PTHR11760">
    <property type="entry name" value="30S/40S RIBOSOMAL PROTEIN S3"/>
    <property type="match status" value="1"/>
</dbReference>
<dbReference type="PANTHER" id="PTHR11760:SF32">
    <property type="entry name" value="SMALL RIBOSOMAL SUBUNIT PROTEIN US3"/>
    <property type="match status" value="1"/>
</dbReference>
<dbReference type="Pfam" id="PF00189">
    <property type="entry name" value="Ribosomal_S3_C"/>
    <property type="match status" value="1"/>
</dbReference>
<dbReference type="SUPFAM" id="SSF54814">
    <property type="entry name" value="Prokaryotic type KH domain (KH-domain type II)"/>
    <property type="match status" value="1"/>
</dbReference>
<dbReference type="SUPFAM" id="SSF54821">
    <property type="entry name" value="Ribosomal protein S3 C-terminal domain"/>
    <property type="match status" value="1"/>
</dbReference>
<accession>Q74MZ4</accession>
<proteinExistence type="inferred from homology"/>
<evidence type="ECO:0000255" key="1">
    <source>
        <dbReference type="HAMAP-Rule" id="MF_01309"/>
    </source>
</evidence>
<evidence type="ECO:0000305" key="2"/>
<keyword id="KW-1185">Reference proteome</keyword>
<keyword id="KW-0687">Ribonucleoprotein</keyword>
<keyword id="KW-0689">Ribosomal protein</keyword>
<keyword id="KW-0694">RNA-binding</keyword>
<keyword id="KW-0699">rRNA-binding</keyword>
<protein>
    <recommendedName>
        <fullName evidence="1">Small ribosomal subunit protein uS3</fullName>
    </recommendedName>
    <alternativeName>
        <fullName evidence="2">30S ribosomal protein S3</fullName>
    </alternativeName>
</protein>
<name>RS3_NANEQ</name>